<reference key="1">
    <citation type="journal article" date="2002" name="Science">
        <title>50 million years of genomic stasis in endosymbiotic bacteria.</title>
        <authorList>
            <person name="Tamas I."/>
            <person name="Klasson L."/>
            <person name="Canbaeck B."/>
            <person name="Naeslund A.K."/>
            <person name="Eriksson A.-S."/>
            <person name="Wernegreen J.J."/>
            <person name="Sandstroem J.P."/>
            <person name="Moran N.A."/>
            <person name="Andersson S.G.E."/>
        </authorList>
    </citation>
    <scope>NUCLEOTIDE SEQUENCE [LARGE SCALE GENOMIC DNA]</scope>
    <source>
        <strain>Sg</strain>
    </source>
</reference>
<proteinExistence type="inferred from homology"/>
<feature type="chain" id="PRO_0000092494" description="Multidrug resistance-like ATP-binding protein MdlA">
    <location>
        <begin position="1"/>
        <end position="581"/>
    </location>
</feature>
<feature type="transmembrane region" description="Helical" evidence="2">
    <location>
        <begin position="23"/>
        <end position="43"/>
    </location>
</feature>
<feature type="transmembrane region" description="Helical" evidence="2">
    <location>
        <begin position="53"/>
        <end position="73"/>
    </location>
</feature>
<feature type="transmembrane region" description="Helical" evidence="2">
    <location>
        <begin position="127"/>
        <end position="149"/>
    </location>
</feature>
<feature type="transmembrane region" description="Helical" evidence="2">
    <location>
        <begin position="153"/>
        <end position="175"/>
    </location>
</feature>
<feature type="transmembrane region" description="Helical" evidence="2">
    <location>
        <begin position="247"/>
        <end position="267"/>
    </location>
</feature>
<feature type="transmembrane region" description="Helical" evidence="2">
    <location>
        <begin position="280"/>
        <end position="300"/>
    </location>
</feature>
<feature type="domain" description="ABC transmembrane type-1" evidence="2">
    <location>
        <begin position="18"/>
        <end position="303"/>
    </location>
</feature>
<feature type="domain" description="ABC transporter" evidence="1">
    <location>
        <begin position="337"/>
        <end position="571"/>
    </location>
</feature>
<feature type="binding site" evidence="1">
    <location>
        <begin position="369"/>
        <end position="376"/>
    </location>
    <ligand>
        <name>ATP</name>
        <dbReference type="ChEBI" id="CHEBI:30616"/>
    </ligand>
</feature>
<sequence>MRLFNQLKWYFIKEWKRYLGSIILLIIIAFLQLLPPKIIGILIDLIIKEKMSGFEILPWISIILLIAIIVYILRYLWRILLFGASYQLATELRVKFYSYLSKQSEIFFLKNRTGDLIARATNDVDRVVFAAGEGVLTLVDSSVMGISVLIVMITQISWLLTIISLIPMPIMAILIKKYGKKLHDTFRNAQSAFSLLNNQTQEILTSIRMIRAFGLEKNQLKKFNNIVNDTGKKNMEVAEIDARFDPVIYLSVAFSNLLAITAGGWLVWNNTITIGKLTSFIMYLGLMIWPMLALAWMFNIVERGSAAWDRIHSIINQNLYIEDGKKTIINMNGKLNINIDMFFYPKNKKPSLKNIYLSLNPGKTLGICGPTGAGKSTLLKLIQRQFKIHKGEILYNSSSLLELKIDYWRSKIGVVNQTSFLFSDSISNNISLGKPKASQKEIEKAAKLADIHKDIVCLPQGYNTQVGERGVMLSGGQKQRIAIARALLLNTEILILDDALSAVDGKTENNILKNLKKWKDKGYSLIIVAHRLSALIHADEIIVIKEGTIIQRGNHEKLIKEKNWYKSMYDHQKIQTEIENF</sequence>
<name>MDLA_BUCAP</name>
<evidence type="ECO:0000255" key="1">
    <source>
        <dbReference type="PROSITE-ProRule" id="PRU00434"/>
    </source>
</evidence>
<evidence type="ECO:0000255" key="2">
    <source>
        <dbReference type="PROSITE-ProRule" id="PRU00441"/>
    </source>
</evidence>
<evidence type="ECO:0000305" key="3"/>
<protein>
    <recommendedName>
        <fullName>Multidrug resistance-like ATP-binding protein MdlA</fullName>
        <ecNumber>7.6.2.2</ecNumber>
    </recommendedName>
</protein>
<comment type="catalytic activity">
    <reaction>
        <text>ATP + H2O + xenobioticSide 1 = ADP + phosphate + xenobioticSide 2.</text>
        <dbReference type="EC" id="7.6.2.2"/>
    </reaction>
</comment>
<comment type="subcellular location">
    <subcellularLocation>
        <location evidence="3">Cell membrane</location>
        <topology evidence="2">Multi-pass membrane protein</topology>
    </subcellularLocation>
</comment>
<comment type="similarity">
    <text evidence="3">Belongs to the ABC transporter superfamily. Drug exporter-2 (TC 3.A.1.117) family.</text>
</comment>
<dbReference type="EC" id="7.6.2.2"/>
<dbReference type="EMBL" id="AE013218">
    <property type="protein sequence ID" value="AAM68007.1"/>
    <property type="molecule type" value="Genomic_DNA"/>
</dbReference>
<dbReference type="RefSeq" id="WP_011053974.1">
    <property type="nucleotide sequence ID" value="NC_004061.1"/>
</dbReference>
<dbReference type="SMR" id="Q8K985"/>
<dbReference type="STRING" id="198804.BUsg_464"/>
<dbReference type="GeneID" id="93003935"/>
<dbReference type="KEGG" id="bas:BUsg_464"/>
<dbReference type="eggNOG" id="COG1132">
    <property type="taxonomic scope" value="Bacteria"/>
</dbReference>
<dbReference type="HOGENOM" id="CLU_000604_84_3_6"/>
<dbReference type="Proteomes" id="UP000000416">
    <property type="component" value="Chromosome"/>
</dbReference>
<dbReference type="GO" id="GO:0005886">
    <property type="term" value="C:plasma membrane"/>
    <property type="evidence" value="ECO:0007669"/>
    <property type="project" value="UniProtKB-SubCell"/>
</dbReference>
<dbReference type="GO" id="GO:0015421">
    <property type="term" value="F:ABC-type oligopeptide transporter activity"/>
    <property type="evidence" value="ECO:0007669"/>
    <property type="project" value="TreeGrafter"/>
</dbReference>
<dbReference type="GO" id="GO:0008559">
    <property type="term" value="F:ABC-type xenobiotic transporter activity"/>
    <property type="evidence" value="ECO:0007669"/>
    <property type="project" value="UniProtKB-EC"/>
</dbReference>
<dbReference type="GO" id="GO:0005524">
    <property type="term" value="F:ATP binding"/>
    <property type="evidence" value="ECO:0007669"/>
    <property type="project" value="UniProtKB-KW"/>
</dbReference>
<dbReference type="GO" id="GO:0016887">
    <property type="term" value="F:ATP hydrolysis activity"/>
    <property type="evidence" value="ECO:0007669"/>
    <property type="project" value="InterPro"/>
</dbReference>
<dbReference type="CDD" id="cd18541">
    <property type="entry name" value="ABC_6TM_TmrB_like"/>
    <property type="match status" value="1"/>
</dbReference>
<dbReference type="FunFam" id="1.20.1560.10:FF:000011">
    <property type="entry name" value="Multidrug ABC transporter ATP-binding protein"/>
    <property type="match status" value="1"/>
</dbReference>
<dbReference type="FunFam" id="3.40.50.300:FF:000221">
    <property type="entry name" value="Multidrug ABC transporter ATP-binding protein"/>
    <property type="match status" value="1"/>
</dbReference>
<dbReference type="Gene3D" id="1.20.1560.10">
    <property type="entry name" value="ABC transporter type 1, transmembrane domain"/>
    <property type="match status" value="1"/>
</dbReference>
<dbReference type="Gene3D" id="3.40.50.300">
    <property type="entry name" value="P-loop containing nucleotide triphosphate hydrolases"/>
    <property type="match status" value="1"/>
</dbReference>
<dbReference type="InterPro" id="IPR003593">
    <property type="entry name" value="AAA+_ATPase"/>
</dbReference>
<dbReference type="InterPro" id="IPR011527">
    <property type="entry name" value="ABC1_TM_dom"/>
</dbReference>
<dbReference type="InterPro" id="IPR036640">
    <property type="entry name" value="ABC1_TM_sf"/>
</dbReference>
<dbReference type="InterPro" id="IPR003439">
    <property type="entry name" value="ABC_transporter-like_ATP-bd"/>
</dbReference>
<dbReference type="InterPro" id="IPR017871">
    <property type="entry name" value="ABC_transporter-like_CS"/>
</dbReference>
<dbReference type="InterPro" id="IPR027417">
    <property type="entry name" value="P-loop_NTPase"/>
</dbReference>
<dbReference type="InterPro" id="IPR039421">
    <property type="entry name" value="Type_1_exporter"/>
</dbReference>
<dbReference type="NCBIfam" id="NF008055">
    <property type="entry name" value="PRK10789.1"/>
    <property type="match status" value="1"/>
</dbReference>
<dbReference type="PANTHER" id="PTHR43394:SF1">
    <property type="entry name" value="ATP-BINDING CASSETTE SUB-FAMILY B MEMBER 10, MITOCHONDRIAL"/>
    <property type="match status" value="1"/>
</dbReference>
<dbReference type="PANTHER" id="PTHR43394">
    <property type="entry name" value="ATP-DEPENDENT PERMEASE MDL1, MITOCHONDRIAL"/>
    <property type="match status" value="1"/>
</dbReference>
<dbReference type="Pfam" id="PF00664">
    <property type="entry name" value="ABC_membrane"/>
    <property type="match status" value="1"/>
</dbReference>
<dbReference type="Pfam" id="PF00005">
    <property type="entry name" value="ABC_tran"/>
    <property type="match status" value="1"/>
</dbReference>
<dbReference type="SMART" id="SM00382">
    <property type="entry name" value="AAA"/>
    <property type="match status" value="1"/>
</dbReference>
<dbReference type="SUPFAM" id="SSF90123">
    <property type="entry name" value="ABC transporter transmembrane region"/>
    <property type="match status" value="1"/>
</dbReference>
<dbReference type="SUPFAM" id="SSF52540">
    <property type="entry name" value="P-loop containing nucleoside triphosphate hydrolases"/>
    <property type="match status" value="1"/>
</dbReference>
<dbReference type="PROSITE" id="PS50929">
    <property type="entry name" value="ABC_TM1F"/>
    <property type="match status" value="1"/>
</dbReference>
<dbReference type="PROSITE" id="PS00211">
    <property type="entry name" value="ABC_TRANSPORTER_1"/>
    <property type="match status" value="1"/>
</dbReference>
<dbReference type="PROSITE" id="PS50893">
    <property type="entry name" value="ABC_TRANSPORTER_2"/>
    <property type="match status" value="1"/>
</dbReference>
<gene>
    <name type="primary">mdlA</name>
    <name type="ordered locus">BUsg_464</name>
</gene>
<accession>Q8K985</accession>
<keyword id="KW-0067">ATP-binding</keyword>
<keyword id="KW-1003">Cell membrane</keyword>
<keyword id="KW-0472">Membrane</keyword>
<keyword id="KW-0547">Nucleotide-binding</keyword>
<keyword id="KW-1278">Translocase</keyword>
<keyword id="KW-0812">Transmembrane</keyword>
<keyword id="KW-1133">Transmembrane helix</keyword>
<keyword id="KW-0813">Transport</keyword>
<organism>
    <name type="scientific">Buchnera aphidicola subsp. Schizaphis graminum (strain Sg)</name>
    <dbReference type="NCBI Taxonomy" id="198804"/>
    <lineage>
        <taxon>Bacteria</taxon>
        <taxon>Pseudomonadati</taxon>
        <taxon>Pseudomonadota</taxon>
        <taxon>Gammaproteobacteria</taxon>
        <taxon>Enterobacterales</taxon>
        <taxon>Erwiniaceae</taxon>
        <taxon>Buchnera</taxon>
    </lineage>
</organism>